<evidence type="ECO:0000250" key="1"/>
<evidence type="ECO:0000255" key="2"/>
<evidence type="ECO:0000305" key="3"/>
<gene>
    <name type="primary">nifH</name>
</gene>
<organism>
    <name type="scientific">Nostoc sp. (strain PCC 6720)</name>
    <name type="common">Anabaenopsis circularis</name>
    <dbReference type="NCBI Taxonomy" id="34077"/>
    <lineage>
        <taxon>Bacteria</taxon>
        <taxon>Bacillati</taxon>
        <taxon>Cyanobacteriota</taxon>
        <taxon>Cyanophyceae</taxon>
        <taxon>Nostocales</taxon>
        <taxon>Nostocaceae</taxon>
        <taxon>Nostoc</taxon>
    </lineage>
</organism>
<feature type="chain" id="PRO_0000139516" description="Nitrogenase iron protein">
    <location>
        <begin position="1"/>
        <end position="295"/>
    </location>
</feature>
<feature type="binding site" evidence="2">
    <location>
        <begin position="13"/>
        <end position="20"/>
    </location>
    <ligand>
        <name>ATP</name>
        <dbReference type="ChEBI" id="CHEBI:30616"/>
    </ligand>
</feature>
<feature type="binding site" evidence="1">
    <location>
        <position position="101"/>
    </location>
    <ligand>
        <name>[4Fe-4S] cluster</name>
        <dbReference type="ChEBI" id="CHEBI:49883"/>
        <note>ligand shared between dimeric partners</note>
    </ligand>
</feature>
<feature type="binding site" evidence="1">
    <location>
        <position position="135"/>
    </location>
    <ligand>
        <name>[4Fe-4S] cluster</name>
        <dbReference type="ChEBI" id="CHEBI:49883"/>
        <note>ligand shared between dimeric partners</note>
    </ligand>
</feature>
<feature type="modified residue" description="ADP-ribosylarginine; by dinitrogenase reductase ADP-ribosyltransferase" evidence="1">
    <location>
        <position position="104"/>
    </location>
</feature>
<reference key="1">
    <citation type="journal article" date="1994" name="Biochim. Biophys. Acta">
        <title>Cloning and nucleotide sequence of the gene encoding dinitrogenase reductase (nifH) from the cyanobacterium Nostoc 6720.</title>
        <authorList>
            <person name="Beesley C.E."/>
            <person name="Smith R.J."/>
            <person name="Temple S.J."/>
            <person name="Lea P.J."/>
        </authorList>
    </citation>
    <scope>NUCLEOTIDE SEQUENCE [GENOMIC DNA]</scope>
</reference>
<accession>Q51296</accession>
<sequence length="295" mass="32230">MTDENIRQIAFYGKGGIGKSTTSQNTLAAMAEMGQRIMIVGCDPKADSTRLMLHAKAKTTVLHLAAERGAVEDLELHEVMLTGFRGVRCVESGGPEPGVGCAGRGIITAINFLEENGAYQDLDFVSYDVLGDVVCGGFAMPIREGKAQEIYIVTSGEMMAMYAANNIARGILKYAHSGGVRLGGLICNSRKTDREAELIENLAERLNTQMIHFVPRDNIVQHAELRRMTVNEYAPDSNQGQEYRALAKKIINNDKLTIPTPIEMDELEALLIEYGILDDDSKHAEIIGKPAEATK</sequence>
<proteinExistence type="inferred from homology"/>
<comment type="function">
    <text evidence="1">The key enzymatic reactions in nitrogen fixation are catalyzed by the nitrogenase complex, which has 2 components: the iron protein and the molybdenum-iron protein.</text>
</comment>
<comment type="catalytic activity">
    <reaction>
        <text>N2 + 8 reduced [2Fe-2S]-[ferredoxin] + 16 ATP + 16 H2O = H2 + 8 oxidized [2Fe-2S]-[ferredoxin] + 2 NH4(+) + 16 ADP + 16 phosphate + 6 H(+)</text>
        <dbReference type="Rhea" id="RHEA:21448"/>
        <dbReference type="Rhea" id="RHEA-COMP:10000"/>
        <dbReference type="Rhea" id="RHEA-COMP:10001"/>
        <dbReference type="ChEBI" id="CHEBI:15377"/>
        <dbReference type="ChEBI" id="CHEBI:15378"/>
        <dbReference type="ChEBI" id="CHEBI:17997"/>
        <dbReference type="ChEBI" id="CHEBI:18276"/>
        <dbReference type="ChEBI" id="CHEBI:28938"/>
        <dbReference type="ChEBI" id="CHEBI:30616"/>
        <dbReference type="ChEBI" id="CHEBI:33737"/>
        <dbReference type="ChEBI" id="CHEBI:33738"/>
        <dbReference type="ChEBI" id="CHEBI:43474"/>
        <dbReference type="ChEBI" id="CHEBI:456216"/>
        <dbReference type="EC" id="1.18.6.1"/>
    </reaction>
</comment>
<comment type="cofactor">
    <cofactor evidence="1">
        <name>[4Fe-4S] cluster</name>
        <dbReference type="ChEBI" id="CHEBI:49883"/>
    </cofactor>
    <text evidence="1">Binds 1 [4Fe-4S] cluster per dimer.</text>
</comment>
<comment type="subunit">
    <text evidence="1">Homodimer.</text>
</comment>
<comment type="PTM">
    <text evidence="1">The reversible ADP-ribosylation of Arg-104 inactivates the nitrogenase reductase and regulates nitrogenase activity.</text>
</comment>
<comment type="similarity">
    <text evidence="3">Belongs to the NifH/BchL/ChlL family.</text>
</comment>
<name>NIFH_NOSS6</name>
<protein>
    <recommendedName>
        <fullName>Nitrogenase iron protein</fullName>
        <ecNumber>1.18.6.1</ecNumber>
    </recommendedName>
    <alternativeName>
        <fullName>Nitrogenase Fe protein</fullName>
    </alternativeName>
    <alternativeName>
        <fullName>Nitrogenase component II</fullName>
    </alternativeName>
    <alternativeName>
        <fullName>Nitrogenase reductase</fullName>
    </alternativeName>
</protein>
<keyword id="KW-0004">4Fe-4S</keyword>
<keyword id="KW-0013">ADP-ribosylation</keyword>
<keyword id="KW-0067">ATP-binding</keyword>
<keyword id="KW-0408">Iron</keyword>
<keyword id="KW-0411">Iron-sulfur</keyword>
<keyword id="KW-0479">Metal-binding</keyword>
<keyword id="KW-0535">Nitrogen fixation</keyword>
<keyword id="KW-0547">Nucleotide-binding</keyword>
<keyword id="KW-0560">Oxidoreductase</keyword>
<dbReference type="EC" id="1.18.6.1"/>
<dbReference type="EMBL" id="Z31716">
    <property type="protein sequence ID" value="CAA83510.1"/>
    <property type="molecule type" value="Genomic_DNA"/>
</dbReference>
<dbReference type="PIR" id="S50135">
    <property type="entry name" value="S50135"/>
</dbReference>
<dbReference type="SMR" id="Q51296"/>
<dbReference type="GO" id="GO:0051539">
    <property type="term" value="F:4 iron, 4 sulfur cluster binding"/>
    <property type="evidence" value="ECO:0007669"/>
    <property type="project" value="UniProtKB-KW"/>
</dbReference>
<dbReference type="GO" id="GO:0005524">
    <property type="term" value="F:ATP binding"/>
    <property type="evidence" value="ECO:0007669"/>
    <property type="project" value="UniProtKB-UniRule"/>
</dbReference>
<dbReference type="GO" id="GO:0046872">
    <property type="term" value="F:metal ion binding"/>
    <property type="evidence" value="ECO:0007669"/>
    <property type="project" value="UniProtKB-KW"/>
</dbReference>
<dbReference type="GO" id="GO:0016163">
    <property type="term" value="F:nitrogenase activity"/>
    <property type="evidence" value="ECO:0007669"/>
    <property type="project" value="UniProtKB-UniRule"/>
</dbReference>
<dbReference type="GO" id="GO:0009399">
    <property type="term" value="P:nitrogen fixation"/>
    <property type="evidence" value="ECO:0007669"/>
    <property type="project" value="UniProtKB-UniRule"/>
</dbReference>
<dbReference type="CDD" id="cd02040">
    <property type="entry name" value="NifH"/>
    <property type="match status" value="1"/>
</dbReference>
<dbReference type="FunFam" id="3.40.50.300:FF:001379">
    <property type="entry name" value="Nitrogenase iron protein 1"/>
    <property type="match status" value="1"/>
</dbReference>
<dbReference type="Gene3D" id="3.40.50.300">
    <property type="entry name" value="P-loop containing nucleotide triphosphate hydrolases"/>
    <property type="match status" value="1"/>
</dbReference>
<dbReference type="HAMAP" id="MF_00533">
    <property type="entry name" value="NifH"/>
    <property type="match status" value="1"/>
</dbReference>
<dbReference type="InterPro" id="IPR030655">
    <property type="entry name" value="NifH/chlL_CS"/>
</dbReference>
<dbReference type="InterPro" id="IPR000392">
    <property type="entry name" value="NifH/frxC"/>
</dbReference>
<dbReference type="InterPro" id="IPR005977">
    <property type="entry name" value="Nitrogenase_Fe_NifH"/>
</dbReference>
<dbReference type="InterPro" id="IPR027417">
    <property type="entry name" value="P-loop_NTPase"/>
</dbReference>
<dbReference type="NCBIfam" id="TIGR01287">
    <property type="entry name" value="nifH"/>
    <property type="match status" value="1"/>
</dbReference>
<dbReference type="PANTHER" id="PTHR42864">
    <property type="entry name" value="LIGHT-INDEPENDENT PROTOCHLOROPHYLLIDE REDUCTASE IRON-SULFUR ATP-BINDING PROTEIN"/>
    <property type="match status" value="1"/>
</dbReference>
<dbReference type="PANTHER" id="PTHR42864:SF2">
    <property type="entry name" value="LIGHT-INDEPENDENT PROTOCHLOROPHYLLIDE REDUCTASE IRON-SULFUR ATP-BINDING PROTEIN"/>
    <property type="match status" value="1"/>
</dbReference>
<dbReference type="Pfam" id="PF00142">
    <property type="entry name" value="Fer4_NifH"/>
    <property type="match status" value="1"/>
</dbReference>
<dbReference type="PIRSF" id="PIRSF000363">
    <property type="entry name" value="Nitrogenase_iron"/>
    <property type="match status" value="1"/>
</dbReference>
<dbReference type="PRINTS" id="PR00091">
    <property type="entry name" value="NITROGNASEII"/>
</dbReference>
<dbReference type="SUPFAM" id="SSF52540">
    <property type="entry name" value="P-loop containing nucleoside triphosphate hydrolases"/>
    <property type="match status" value="1"/>
</dbReference>
<dbReference type="PROSITE" id="PS00746">
    <property type="entry name" value="NIFH_FRXC_1"/>
    <property type="match status" value="1"/>
</dbReference>
<dbReference type="PROSITE" id="PS00692">
    <property type="entry name" value="NIFH_FRXC_2"/>
    <property type="match status" value="1"/>
</dbReference>
<dbReference type="PROSITE" id="PS51026">
    <property type="entry name" value="NIFH_FRXC_3"/>
    <property type="match status" value="1"/>
</dbReference>